<gene>
    <name evidence="8" type="primary">odc-1</name>
    <name evidence="8" type="ORF">K11C4.4</name>
</gene>
<organism>
    <name type="scientific">Caenorhabditis elegans</name>
    <dbReference type="NCBI Taxonomy" id="6239"/>
    <lineage>
        <taxon>Eukaryota</taxon>
        <taxon>Metazoa</taxon>
        <taxon>Ecdysozoa</taxon>
        <taxon>Nematoda</taxon>
        <taxon>Chromadorea</taxon>
        <taxon>Rhabditida</taxon>
        <taxon>Rhabditina</taxon>
        <taxon>Rhabditomorpha</taxon>
        <taxon>Rhabditoidea</taxon>
        <taxon>Rhabditidae</taxon>
        <taxon>Peloderinae</taxon>
        <taxon>Caenorhabditis</taxon>
    </lineage>
</organism>
<sequence length="422" mass="46920">MISQFEIIGDNKIGVLPKQVDQLQMCRDIAASKDLQENDSSFMLVDLDKIIERFQLWKRELPMIEPFYAVKCNTDLVLIRILASLGCGFDCASKDEIDIVMGTGVSAERIIYANPCKTRSFIAHAMDRDVKMMTFDNPEELLKIAKLHPNAEMILRIAVSDPTATCPLNLKFGADPIIAAPQLLKTASEEGINVVGISFHVGSGCNDASAYRNALQHAKNLCEIGEGLGFKMDIIDMGGGFPGAEHHNPFEKIAETIRDALDEFFPDTNKRLIAEPGRFFAAGPFSLVANIIHATEVPASKITKDPKDCADHGYMYYINDGVYGSFNCILFDHAHPIGSPLFDTDRNEKFMSTIWGPTCDSLDLVEDKKLMPKMNVGEWLYYPDMGAYTLAAATTFNGFSKPVPMYVMSEEMWESIRDSTHV</sequence>
<feature type="chain" id="PRO_0000149898" description="Ornithine decarboxylase">
    <location>
        <begin position="1"/>
        <end position="422"/>
    </location>
</feature>
<feature type="active site" description="Proton donor; shared with dimeric partner" evidence="3">
    <location>
        <position position="359"/>
    </location>
</feature>
<feature type="binding site" evidence="3">
    <location>
        <position position="203"/>
    </location>
    <ligand>
        <name>pyridoxal 5'-phosphate</name>
        <dbReference type="ChEBI" id="CHEBI:597326"/>
    </ligand>
</feature>
<feature type="binding site" evidence="3">
    <location>
        <position position="240"/>
    </location>
    <ligand>
        <name>pyridoxal 5'-phosphate</name>
        <dbReference type="ChEBI" id="CHEBI:597326"/>
    </ligand>
</feature>
<feature type="binding site" evidence="3">
    <location>
        <begin position="275"/>
        <end position="278"/>
    </location>
    <ligand>
        <name>pyridoxal 5'-phosphate</name>
        <dbReference type="ChEBI" id="CHEBI:597326"/>
    </ligand>
</feature>
<feature type="binding site" description="in other chain" evidence="2">
    <location>
        <begin position="331"/>
        <end position="332"/>
    </location>
    <ligand>
        <name>substrate</name>
        <note>ligand shared between dimeric partners</note>
    </ligand>
</feature>
<feature type="binding site" evidence="2">
    <location>
        <position position="360"/>
    </location>
    <ligand>
        <name>substrate</name>
        <note>ligand shared between dimeric partners</note>
    </ligand>
</feature>
<feature type="binding site" evidence="3">
    <location>
        <position position="388"/>
    </location>
    <ligand>
        <name>pyridoxal 5'-phosphate</name>
        <dbReference type="ChEBI" id="CHEBI:597326"/>
    </ligand>
</feature>
<feature type="site" description="Stacks against the aromatic ring of pyridoxal phosphate and stabilizes reaction intermediates" evidence="1">
    <location>
        <position position="200"/>
    </location>
</feature>
<feature type="modified residue" description="N6-(pyridoxal phosphate)lysine" evidence="3">
    <location>
        <position position="71"/>
    </location>
</feature>
<feature type="sequence conflict" description="In Ref. 1; AAA88795." evidence="6" ref="1">
    <original>IA</original>
    <variation>YR</variation>
    <location>
        <begin position="273"/>
        <end position="274"/>
    </location>
</feature>
<name>DCOR_CAEEL</name>
<reference key="1">
    <citation type="journal article" date="1995" name="Genetics">
        <title>The ornithine decarboxylase gene of Caenorhabditis elegans: cloning, mapping and mutagenesis.</title>
        <authorList>
            <person name="Macrae M."/>
            <person name="Plasterk R.H."/>
            <person name="Coffino P."/>
        </authorList>
    </citation>
    <scope>NUCLEOTIDE SEQUENCE [GENOMIC DNA]</scope>
    <scope>FUNCTION</scope>
    <scope>CATALYTIC ACTIVITY</scope>
    <scope>PATHWAY</scope>
    <scope>DISRUPTION PHENOTYPE</scope>
    <source>
        <strain>Bristol N2</strain>
    </source>
</reference>
<reference key="2">
    <citation type="journal article" date="1998" name="Science">
        <title>Genome sequence of the nematode C. elegans: a platform for investigating biology.</title>
        <authorList>
            <consortium name="The C. elegans sequencing consortium"/>
        </authorList>
    </citation>
    <scope>NUCLEOTIDE SEQUENCE [LARGE SCALE GENOMIC DNA]</scope>
    <source>
        <strain>Bristol N2</strain>
    </source>
</reference>
<reference key="3">
    <citation type="journal article" date="2010" name="FASEB J.">
        <title>Caenorhabditis elegans P5B-type ATPase CATP-5 operates in polyamine transport and is crucial for norspermidine-mediated suppression of RNA interference.</title>
        <authorList>
            <person name="Heinick A."/>
            <person name="Urban K."/>
            <person name="Roth S."/>
            <person name="Spies D."/>
            <person name="Nunes F."/>
            <person name="Phanstiel O. IV"/>
            <person name="Liebau E."/>
            <person name="Lueersen K."/>
        </authorList>
    </citation>
    <scope>FUNCTION</scope>
    <scope>CATALYTIC ACTIVITY</scope>
    <scope>DISRUPTION PHENOTYPE</scope>
</reference>
<comment type="function">
    <text evidence="4 5">Catalyzes the first and rate-limiting step of polyamine biosynthesis that converts ornithine into putrescine, which is the precursor for the polyamines, spermidine and spermine (PubMed:19762559, PubMed:7498733). Polyamines are essential for cell proliferation and are implicated in cellular processes, ranging from DNA replication to apoptosis (PubMed:19762559).</text>
</comment>
<comment type="catalytic activity">
    <reaction evidence="5 7">
        <text>L-ornithine + H(+) = putrescine + CO2</text>
        <dbReference type="Rhea" id="RHEA:22964"/>
        <dbReference type="ChEBI" id="CHEBI:15378"/>
        <dbReference type="ChEBI" id="CHEBI:16526"/>
        <dbReference type="ChEBI" id="CHEBI:46911"/>
        <dbReference type="ChEBI" id="CHEBI:326268"/>
        <dbReference type="EC" id="4.1.1.17"/>
    </reaction>
</comment>
<comment type="cofactor">
    <cofactor evidence="3">
        <name>pyridoxal 5'-phosphate</name>
        <dbReference type="ChEBI" id="CHEBI:597326"/>
    </cofactor>
</comment>
<comment type="activity regulation">
    <text evidence="3">Inhibited by antizyme (AZ) in response to polyamine levels. AZ inhibits the assembly of the functional homodimer by binding to ODC monomers and targeting them for ubiquitin-independent proteolytic destruction by the 26S proteasome.</text>
</comment>
<comment type="pathway">
    <text evidence="5">Amine and polyamine biosynthesis; putrescine biosynthesis via L-ornithine pathway; putrescine from L-ornithine: step 1/1.</text>
</comment>
<comment type="subunit">
    <text evidence="3">Homodimer. Only the dimer is catalytically active, as the active sites are constructed of residues from both monomers.</text>
</comment>
<comment type="disruption phenotype">
    <text evidence="4 5">Deletion mutant pc13 has a reduced brood size and reduced enzymatic activity (PubMed:7498733). Smaller body size as compared to wild-type. Reduced putrescine and spermidine levels (PubMed:19762559). Double knockout with the polyamine transporter catp-5 results in a reduced brood size, delayed postembryonic development, and a more marked reduction in putrescine and spermidine levels as compared to the single mutants (PubMed:19762559).</text>
</comment>
<comment type="similarity">
    <text evidence="6">Belongs to the Orn/Lys/Arg decarboxylase class-II family.</text>
</comment>
<dbReference type="EC" id="4.1.1.17" evidence="5 7"/>
<dbReference type="EMBL" id="U03059">
    <property type="protein sequence ID" value="AAA88795.1"/>
    <property type="molecule type" value="Genomic_DNA"/>
</dbReference>
<dbReference type="EMBL" id="FO081626">
    <property type="protein sequence ID" value="CCD72902.1"/>
    <property type="molecule type" value="Genomic_DNA"/>
</dbReference>
<dbReference type="PIR" id="T29143">
    <property type="entry name" value="T29143"/>
</dbReference>
<dbReference type="RefSeq" id="NP_504752.1">
    <property type="nucleotide sequence ID" value="NM_072351.7"/>
</dbReference>
<dbReference type="SMR" id="P41931"/>
<dbReference type="BioGRID" id="44124">
    <property type="interactions" value="1"/>
</dbReference>
<dbReference type="FunCoup" id="P41931">
    <property type="interactions" value="845"/>
</dbReference>
<dbReference type="STRING" id="6239.K11C4.4.1"/>
<dbReference type="PaxDb" id="6239-K11C4.4.1"/>
<dbReference type="PeptideAtlas" id="P41931"/>
<dbReference type="EnsemblMetazoa" id="K11C4.4.1">
    <property type="protein sequence ID" value="K11C4.4.1"/>
    <property type="gene ID" value="WBGene00003844"/>
</dbReference>
<dbReference type="GeneID" id="179079"/>
<dbReference type="KEGG" id="cel:CELE_K11C4.4"/>
<dbReference type="UCSC" id="K11C4.4.1">
    <property type="organism name" value="c. elegans"/>
</dbReference>
<dbReference type="AGR" id="WB:WBGene00003844"/>
<dbReference type="CTD" id="179079"/>
<dbReference type="WormBase" id="K11C4.4">
    <property type="protein sequence ID" value="CE12114"/>
    <property type="gene ID" value="WBGene00003844"/>
    <property type="gene designation" value="odc-1"/>
</dbReference>
<dbReference type="eggNOG" id="KOG0622">
    <property type="taxonomic scope" value="Eukaryota"/>
</dbReference>
<dbReference type="GeneTree" id="ENSGT00950000182995"/>
<dbReference type="HOGENOM" id="CLU_026444_1_1_1"/>
<dbReference type="InParanoid" id="P41931"/>
<dbReference type="OMA" id="AYCRSMA"/>
<dbReference type="OrthoDB" id="5034579at2759"/>
<dbReference type="PhylomeDB" id="P41931"/>
<dbReference type="Reactome" id="R-CEL-350562">
    <property type="pathway name" value="Regulation of ornithine decarboxylase (ODC)"/>
</dbReference>
<dbReference type="Reactome" id="R-CEL-351143">
    <property type="pathway name" value="Agmatine biosynthesis"/>
</dbReference>
<dbReference type="Reactome" id="R-CEL-351202">
    <property type="pathway name" value="Metabolism of polyamines"/>
</dbReference>
<dbReference type="UniPathway" id="UPA00535">
    <property type="reaction ID" value="UER00288"/>
</dbReference>
<dbReference type="PRO" id="PR:P41931"/>
<dbReference type="Proteomes" id="UP000001940">
    <property type="component" value="Chromosome V"/>
</dbReference>
<dbReference type="Bgee" id="WBGene00003844">
    <property type="expression patterns" value="Expressed in pharyngeal muscle cell (C elegans) and 3 other cell types or tissues"/>
</dbReference>
<dbReference type="GO" id="GO:0005737">
    <property type="term" value="C:cytoplasm"/>
    <property type="evidence" value="ECO:0000318"/>
    <property type="project" value="GO_Central"/>
</dbReference>
<dbReference type="GO" id="GO:0004586">
    <property type="term" value="F:ornithine decarboxylase activity"/>
    <property type="evidence" value="ECO:0000314"/>
    <property type="project" value="WormBase"/>
</dbReference>
<dbReference type="GO" id="GO:0033387">
    <property type="term" value="P:putrescine biosynthetic process from arginine, via ornithine"/>
    <property type="evidence" value="ECO:0000314"/>
    <property type="project" value="WormBase"/>
</dbReference>
<dbReference type="CDD" id="cd00622">
    <property type="entry name" value="PLPDE_III_ODC"/>
    <property type="match status" value="1"/>
</dbReference>
<dbReference type="FunFam" id="3.20.20.10:FF:000005">
    <property type="entry name" value="Ornithine decarboxylase"/>
    <property type="match status" value="1"/>
</dbReference>
<dbReference type="Gene3D" id="3.20.20.10">
    <property type="entry name" value="Alanine racemase"/>
    <property type="match status" value="1"/>
</dbReference>
<dbReference type="Gene3D" id="2.40.37.10">
    <property type="entry name" value="Lyase, Ornithine Decarboxylase, Chain A, domain 1"/>
    <property type="match status" value="1"/>
</dbReference>
<dbReference type="InterPro" id="IPR009006">
    <property type="entry name" value="Ala_racemase/Decarboxylase_C"/>
</dbReference>
<dbReference type="InterPro" id="IPR022643">
    <property type="entry name" value="De-COase2_C"/>
</dbReference>
<dbReference type="InterPro" id="IPR022644">
    <property type="entry name" value="De-COase2_N"/>
</dbReference>
<dbReference type="InterPro" id="IPR022653">
    <property type="entry name" value="De-COase2_pyr-phos_BS"/>
</dbReference>
<dbReference type="InterPro" id="IPR000183">
    <property type="entry name" value="Orn/DAP/Arg_de-COase"/>
</dbReference>
<dbReference type="InterPro" id="IPR002433">
    <property type="entry name" value="Orn_de-COase"/>
</dbReference>
<dbReference type="InterPro" id="IPR029066">
    <property type="entry name" value="PLP-binding_barrel"/>
</dbReference>
<dbReference type="PANTHER" id="PTHR11482">
    <property type="entry name" value="ARGININE/DIAMINOPIMELATE/ORNITHINE DECARBOXYLASE"/>
    <property type="match status" value="1"/>
</dbReference>
<dbReference type="PANTHER" id="PTHR11482:SF6">
    <property type="entry name" value="ORNITHINE DECARBOXYLASE 1-RELATED"/>
    <property type="match status" value="1"/>
</dbReference>
<dbReference type="Pfam" id="PF02784">
    <property type="entry name" value="Orn_Arg_deC_N"/>
    <property type="match status" value="1"/>
</dbReference>
<dbReference type="Pfam" id="PF00278">
    <property type="entry name" value="Orn_DAP_Arg_deC"/>
    <property type="match status" value="1"/>
</dbReference>
<dbReference type="PRINTS" id="PR01179">
    <property type="entry name" value="ODADCRBXLASE"/>
</dbReference>
<dbReference type="PRINTS" id="PR01182">
    <property type="entry name" value="ORNDCRBXLASE"/>
</dbReference>
<dbReference type="SUPFAM" id="SSF50621">
    <property type="entry name" value="Alanine racemase C-terminal domain-like"/>
    <property type="match status" value="1"/>
</dbReference>
<dbReference type="SUPFAM" id="SSF51419">
    <property type="entry name" value="PLP-binding barrel"/>
    <property type="match status" value="1"/>
</dbReference>
<dbReference type="PROSITE" id="PS00878">
    <property type="entry name" value="ODR_DC_2_1"/>
    <property type="match status" value="1"/>
</dbReference>
<dbReference type="PROSITE" id="PS00879">
    <property type="entry name" value="ODR_DC_2_2"/>
    <property type="match status" value="1"/>
</dbReference>
<proteinExistence type="evidence at protein level"/>
<accession>P41931</accession>
<accession>Q94278</accession>
<evidence type="ECO:0000250" key="1">
    <source>
        <dbReference type="UniProtKB" id="P00860"/>
    </source>
</evidence>
<evidence type="ECO:0000250" key="2">
    <source>
        <dbReference type="UniProtKB" id="P07805"/>
    </source>
</evidence>
<evidence type="ECO:0000250" key="3">
    <source>
        <dbReference type="UniProtKB" id="P11926"/>
    </source>
</evidence>
<evidence type="ECO:0000269" key="4">
    <source>
    </source>
</evidence>
<evidence type="ECO:0000269" key="5">
    <source>
    </source>
</evidence>
<evidence type="ECO:0000305" key="6"/>
<evidence type="ECO:0000305" key="7">
    <source>
    </source>
</evidence>
<evidence type="ECO:0000312" key="8">
    <source>
        <dbReference type="WormBase" id="K11C4.4"/>
    </source>
</evidence>
<protein>
    <recommendedName>
        <fullName>Ornithine decarboxylase</fullName>
        <shortName>ODC</shortName>
        <ecNumber evidence="5 7">4.1.1.17</ecNumber>
    </recommendedName>
</protein>
<keyword id="KW-0210">Decarboxylase</keyword>
<keyword id="KW-0456">Lyase</keyword>
<keyword id="KW-0620">Polyamine biosynthesis</keyword>
<keyword id="KW-0663">Pyridoxal phosphate</keyword>
<keyword id="KW-1185">Reference proteome</keyword>